<evidence type="ECO:0000250" key="1">
    <source>
        <dbReference type="UniProtKB" id="Q8BTY2"/>
    </source>
</evidence>
<evidence type="ECO:0000250" key="2">
    <source>
        <dbReference type="UniProtKB" id="Q9R1N3"/>
    </source>
</evidence>
<evidence type="ECO:0000250" key="3">
    <source>
        <dbReference type="UniProtKB" id="Q9Y6R1"/>
    </source>
</evidence>
<evidence type="ECO:0000255" key="4"/>
<evidence type="ECO:0000256" key="5">
    <source>
        <dbReference type="SAM" id="MobiDB-lite"/>
    </source>
</evidence>
<evidence type="ECO:0000269" key="6">
    <source>
    </source>
</evidence>
<evidence type="ECO:0000269" key="7">
    <source>
    </source>
</evidence>
<evidence type="ECO:0000269" key="8">
    <source>
    </source>
</evidence>
<evidence type="ECO:0000269" key="9">
    <source>
    </source>
</evidence>
<evidence type="ECO:0000269" key="10">
    <source>
    </source>
</evidence>
<evidence type="ECO:0000269" key="11">
    <source>
    </source>
</evidence>
<evidence type="ECO:0000269" key="12">
    <source>
    </source>
</evidence>
<evidence type="ECO:0000269" key="13">
    <source>
    </source>
</evidence>
<evidence type="ECO:0000269" key="14">
    <source>
    </source>
</evidence>
<evidence type="ECO:0000269" key="15">
    <source>
    </source>
</evidence>
<evidence type="ECO:0000269" key="16">
    <source ref="4"/>
</evidence>
<evidence type="ECO:0000303" key="17">
    <source>
    </source>
</evidence>
<evidence type="ECO:0000303" key="18">
    <source>
    </source>
</evidence>
<evidence type="ECO:0000303" key="19">
    <source>
    </source>
</evidence>
<evidence type="ECO:0000303" key="20">
    <source ref="3"/>
</evidence>
<evidence type="ECO:0000303" key="21">
    <source ref="4"/>
</evidence>
<evidence type="ECO:0000303" key="22">
    <source ref="5"/>
</evidence>
<evidence type="ECO:0000305" key="23"/>
<evidence type="ECO:0007744" key="24">
    <source>
    </source>
</evidence>
<evidence type="ECO:0007744" key="25">
    <source>
    </source>
</evidence>
<evidence type="ECO:0007744" key="26">
    <source>
    </source>
</evidence>
<evidence type="ECO:0007744" key="27">
    <source>
    </source>
</evidence>
<evidence type="ECO:0007744" key="28">
    <source>
    </source>
</evidence>
<evidence type="ECO:0007744" key="29">
    <source>
    </source>
</evidence>
<gene>
    <name type="primary">SLC4A7</name>
    <name type="synonym">BT</name>
    <name type="synonym">NBC2</name>
    <name type="synonym">NBC2B</name>
    <name type="synonym">NBC3</name>
    <name type="synonym">NBCn1</name>
    <name type="synonym">SBC2</name>
    <name type="synonym">SLC4A6</name>
</gene>
<keyword id="KW-0025">Alternative splicing</keyword>
<keyword id="KW-1003">Cell membrane</keyword>
<keyword id="KW-0966">Cell projection</keyword>
<keyword id="KW-1015">Disulfide bond</keyword>
<keyword id="KW-0325">Glycoprotein</keyword>
<keyword id="KW-0406">Ion transport</keyword>
<keyword id="KW-0472">Membrane</keyword>
<keyword id="KW-0597">Phosphoprotein</keyword>
<keyword id="KW-1267">Proteomics identification</keyword>
<keyword id="KW-1185">Reference proteome</keyword>
<keyword id="KW-0915">Sodium</keyword>
<keyword id="KW-0739">Sodium transport</keyword>
<keyword id="KW-0769">Symport</keyword>
<keyword id="KW-0812">Transmembrane</keyword>
<keyword id="KW-1133">Transmembrane helix</keyword>
<keyword id="KW-0813">Transport</keyword>
<comment type="function">
    <text evidence="1 6 7 9 10 13 14">Electroneutral sodium- and bicarbonate-dependent cotransporter with a Na(+):HCO3(-) 1:1 stoichiometry (PubMed:10347222, PubMed:12403779, PubMed:14578046, PubMed:14736710). Mediates the sodium-dependent bicarbonate transport important for pH recovery after acid load as well as for regulation of steady-state pH in the duodenum and vascular smooth muscle cells (By similarity). Plays a key role in macrophage acidification, mediating bicarbonate import into the cytoplasm which is crucial for net acid extrusion and maintenance of cytoplasmic pH during phagocytosis (PubMed:29779931). Provides cellular bicarbonate for de novo purine and pyrimidine synthesis and is a key mediator of de novo nucleotide synthesis downstream of mTORC1 signaling in proliferating cells (PubMed:35772404).</text>
</comment>
<comment type="function">
    <molecule>Isoform 6</molecule>
    <text evidence="13">Plays a key role in macrophage acidification, mediating bicarbonate import into the cytoplasm which is crucial for net acid extrusion and maintenance of cytoplasmic pH during phagocytosis.</text>
</comment>
<comment type="catalytic activity">
    <reaction evidence="6 7 9 10 13 14">
        <text>hydrogencarbonate(in) + Na(+)(in) = hydrogencarbonate(out) + Na(+)(out)</text>
        <dbReference type="Rhea" id="RHEA:70267"/>
        <dbReference type="ChEBI" id="CHEBI:17544"/>
        <dbReference type="ChEBI" id="CHEBI:29101"/>
    </reaction>
</comment>
<comment type="catalytic activity">
    <molecule>Isoform 6</molecule>
    <reaction evidence="13">
        <text>hydrogencarbonate(in) + Na(+)(in) = hydrogencarbonate(out) + Na(+)(out)</text>
        <dbReference type="Rhea" id="RHEA:70267"/>
        <dbReference type="ChEBI" id="CHEBI:17544"/>
        <dbReference type="ChEBI" id="CHEBI:29101"/>
    </reaction>
</comment>
<comment type="activity regulation">
    <text evidence="6 10">Transporter activity is regulated by CA2/carbonic anhydrase 2, cAMP and PKA. Insensitive to stilbene derivatives. Inhibited by 5-(N-ethyl-N-isopropyl)-amiloride (EIPA).</text>
</comment>
<comment type="biophysicochemical properties">
    <kinetics>
        <KM evidence="6">24 mM for external sodium</KM>
    </kinetics>
</comment>
<comment type="subunit">
    <text evidence="7 8 10 11">Interacts with CFTR through NHERF1/EBP50. Interacts with USH1C. Forms a complex with ATP6V1B1 and NHERF1/EBP50. Interacts in a pH dependent-manner with CA2/carbonic anhydrase 2.</text>
</comment>
<comment type="interaction">
    <interactant intactId="EBI-1044546">
        <id>Q9Y6M7</id>
    </interactant>
    <interactant intactId="EBI-725145">
        <id>O76071</id>
        <label>CIAO1</label>
    </interactant>
    <organismsDiffer>false</organismsDiffer>
    <experiments>3</experiments>
</comment>
<comment type="interaction">
    <interactant intactId="EBI-1044546">
        <id>Q9Y6M7</id>
    </interactant>
    <interactant intactId="EBI-11993254">
        <id>Q9BYR2</id>
        <label>KRTAP4-5</label>
    </interactant>
    <organismsDiffer>false</organismsDiffer>
    <experiments>3</experiments>
</comment>
<comment type="subcellular location">
    <subcellularLocation>
        <location evidence="2">Basolateral cell membrane</location>
        <topology evidence="4">Multi-pass membrane protein</topology>
    </subcellularLocation>
    <subcellularLocation>
        <location evidence="2">Apical cell membrane</location>
        <topology evidence="4">Multi-pass membrane protein</topology>
    </subcellularLocation>
    <subcellularLocation>
        <location evidence="2">Cell projection</location>
        <location evidence="2">Stereocilium</location>
    </subcellularLocation>
    <subcellularLocation>
        <location evidence="9 13">Cell membrane</location>
        <topology evidence="4">Multi-pass membrane protein</topology>
    </subcellularLocation>
    <text evidence="2">Localizes to the stereocilia of cochlear outer hair cells and to the lateral membrane of cochlear inner hair cells (By similarity).</text>
</comment>
<comment type="subcellular location">
    <molecule>Isoform 6</molecule>
    <subcellularLocation>
        <location evidence="13">Cell membrane</location>
        <topology evidence="4">Multi-pass membrane protein</topology>
    </subcellularLocation>
</comment>
<comment type="alternative products">
    <event type="alternative splicing"/>
    <isoform>
        <id>Q9Y6M7-1</id>
        <name>1</name>
        <name>mNBC3</name>
        <name>NBCn1-A</name>
        <sequence type="displayed"/>
    </isoform>
    <isoform>
        <id>Q9Y6M7-2</id>
        <name>2</name>
        <name>NBCn1-F</name>
        <sequence type="described" ref="VSP_047844"/>
    </isoform>
    <isoform>
        <id>Q9Y6M7-3</id>
        <name>3</name>
        <sequence type="described" ref="VSP_047839 VSP_047842 VSP_047844 VSP_047849"/>
    </isoform>
    <isoform>
        <id>Q9Y6M7-4</id>
        <name>4</name>
        <sequence type="described" ref="VSP_047839 VSP_047842 VSP_047844"/>
    </isoform>
    <isoform>
        <id>Q9Y6M7-5</id>
        <name>5</name>
        <sequence type="described" ref="VSP_047838 VSP_047845 VSP_047848"/>
    </isoform>
    <isoform>
        <id>Q9Y6M7-6</id>
        <name>6</name>
        <name>NBCn1-G</name>
        <sequence type="described" ref="VSP_047840 VSP_047844 VSP_047848"/>
    </isoform>
    <isoform>
        <id>Q9Y6M7-7</id>
        <name>7</name>
        <name>NBCn1-D</name>
        <sequence type="described" ref="VSP_047841 VSP_047848"/>
    </isoform>
    <isoform>
        <id>Q9Y6M7-8</id>
        <name>8</name>
        <name>NBCn1-C</name>
        <sequence type="described" ref="VSP_047841 VSP_047843 VSP_047848"/>
    </isoform>
    <isoform>
        <id>Q9Y6M7-9</id>
        <name>9</name>
        <name>NBCn1-E</name>
        <sequence type="described" ref="VSP_047840 VSP_047844"/>
    </isoform>
    <isoform>
        <id>Q9Y6M7-10</id>
        <name>10</name>
        <sequence type="described" ref="VSP_047840 VSP_047843 VSP_047846 VSP_047847"/>
    </isoform>
    <isoform>
        <id>Q9Y6M7-11</id>
        <name>11</name>
        <sequence type="described" ref="VSP_047840 VSP_047844 VSP_047846 VSP_047847"/>
    </isoform>
    <isoform>
        <id>Q9Y6M7-12</id>
        <name>12</name>
        <name>NBCn1-H</name>
        <sequence type="described" ref="VSP_047840 VSP_047843"/>
    </isoform>
    <isoform>
        <id>Q9Y6M7-13</id>
        <name>13</name>
        <sequence type="described" ref="VSP_047841 VSP_047844 VSP_047848"/>
    </isoform>
    <isoform>
        <id>Q9Y6M7-14</id>
        <name>14</name>
        <sequence type="described" ref="VSP_047841 VSP_047844 VSP_047846 VSP_047847"/>
    </isoform>
</comment>
<comment type="tissue specificity">
    <text evidence="15">Highly expressed in testis and spleen. Also expressed in retina, colon, small intestine, ovary, thymus, prostate, muscle, heart and kidney.</text>
</comment>
<comment type="tissue specificity">
    <molecule>Isoform 1</molecule>
    <text evidence="6">Expressed in skeletal muscle and heart muscle.</text>
</comment>
<comment type="induction">
    <text evidence="13 14">In response to growth factor stimuli, mTORC1 activation, through the RPS6KA1-dependent EIF4B phosphorylation, stimulates SLC4A7 mRNA translation (at protein level) (PubMed:35772404). Strongly induced upon macrophage differentiation (PubMed:29779931).</text>
</comment>
<comment type="domain">
    <text evidence="7">The PDZ-binding motif mediates interaction with the CFTR, NHERF1/EBP50 complex and probably with USH1C.</text>
</comment>
<comment type="similarity">
    <text evidence="23">Belongs to the anion exchanger (TC 2.A.31) family.</text>
</comment>
<dbReference type="EMBL" id="AB012130">
    <property type="protein sequence ID" value="BAA25898.1"/>
    <property type="molecule type" value="mRNA"/>
</dbReference>
<dbReference type="EMBL" id="AF047033">
    <property type="protein sequence ID" value="AAD38322.1"/>
    <property type="molecule type" value="mRNA"/>
</dbReference>
<dbReference type="EMBL" id="AF089726">
    <property type="protein sequence ID" value="AAG16773.1"/>
    <property type="molecule type" value="mRNA"/>
</dbReference>
<dbReference type="EMBL" id="AF053755">
    <property type="protein sequence ID" value="AAF21720.1"/>
    <property type="molecule type" value="mRNA"/>
</dbReference>
<dbReference type="EMBL" id="EU499349">
    <property type="protein sequence ID" value="ACB47400.1"/>
    <property type="molecule type" value="mRNA"/>
</dbReference>
<dbReference type="EMBL" id="EU934246">
    <property type="protein sequence ID" value="ACH61958.1"/>
    <property type="molecule type" value="mRNA"/>
</dbReference>
<dbReference type="EMBL" id="EU934248">
    <property type="protein sequence ID" value="ACH61960.1"/>
    <property type="molecule type" value="mRNA"/>
</dbReference>
<dbReference type="EMBL" id="EU934249">
    <property type="protein sequence ID" value="ACH61961.1"/>
    <property type="molecule type" value="mRNA"/>
</dbReference>
<dbReference type="EMBL" id="EU934250">
    <property type="protein sequence ID" value="ACH61962.1"/>
    <property type="molecule type" value="mRNA"/>
</dbReference>
<dbReference type="EMBL" id="FJ178574">
    <property type="protein sequence ID" value="ACI24740.1"/>
    <property type="molecule type" value="mRNA"/>
</dbReference>
<dbReference type="EMBL" id="FJ178575">
    <property type="protein sequence ID" value="ACI24741.1"/>
    <property type="molecule type" value="mRNA"/>
</dbReference>
<dbReference type="EMBL" id="FJ178576">
    <property type="protein sequence ID" value="ACI24742.1"/>
    <property type="molecule type" value="mRNA"/>
</dbReference>
<dbReference type="EMBL" id="GU354307">
    <property type="protein sequence ID" value="ADC32649.1"/>
    <property type="molecule type" value="mRNA"/>
</dbReference>
<dbReference type="EMBL" id="GU354308">
    <property type="protein sequence ID" value="ADC32650.1"/>
    <property type="molecule type" value="mRNA"/>
</dbReference>
<dbReference type="EMBL" id="GU354309">
    <property type="protein sequence ID" value="ADC32651.1"/>
    <property type="molecule type" value="mRNA"/>
</dbReference>
<dbReference type="EMBL" id="GU354310">
    <property type="protein sequence ID" value="ADC32652.1"/>
    <property type="molecule type" value="mRNA"/>
</dbReference>
<dbReference type="EMBL" id="CR627428">
    <property type="protein sequence ID" value="CAH10515.1"/>
    <property type="molecule type" value="mRNA"/>
</dbReference>
<dbReference type="EMBL" id="AC099535">
    <property type="status" value="NOT_ANNOTATED_CDS"/>
    <property type="molecule type" value="Genomic_DNA"/>
</dbReference>
<dbReference type="EMBL" id="CH471055">
    <property type="protein sequence ID" value="EAW64382.1"/>
    <property type="molecule type" value="Genomic_DNA"/>
</dbReference>
<dbReference type="CCDS" id="CCDS33721.1">
    <molecule id="Q9Y6M7-1"/>
</dbReference>
<dbReference type="CCDS" id="CCDS58819.1">
    <molecule id="Q9Y6M7-2"/>
</dbReference>
<dbReference type="CCDS" id="CCDS58820.1">
    <molecule id="Q9Y6M7-6"/>
</dbReference>
<dbReference type="CCDS" id="CCDS82747.1">
    <molecule id="Q9Y6M7-7"/>
</dbReference>
<dbReference type="CCDS" id="CCDS82749.1">
    <molecule id="Q9Y6M7-8"/>
</dbReference>
<dbReference type="CCDS" id="CCDS82750.1">
    <molecule id="Q9Y6M7-9"/>
</dbReference>
<dbReference type="CCDS" id="CCDS82751.1">
    <molecule id="Q9Y6M7-12"/>
</dbReference>
<dbReference type="PIR" id="JE0160">
    <property type="entry name" value="JE0160"/>
</dbReference>
<dbReference type="RefSeq" id="NP_001245308.1">
    <molecule id="Q9Y6M7-6"/>
    <property type="nucleotide sequence ID" value="NM_001258379.2"/>
</dbReference>
<dbReference type="RefSeq" id="NP_001245309.1">
    <molecule id="Q9Y6M7-2"/>
    <property type="nucleotide sequence ID" value="NM_001258380.2"/>
</dbReference>
<dbReference type="RefSeq" id="NP_001308032.1">
    <molecule id="Q9Y6M7-7"/>
    <property type="nucleotide sequence ID" value="NM_001321103.2"/>
</dbReference>
<dbReference type="RefSeq" id="NP_001308033.1">
    <molecule id="Q9Y6M7-8"/>
    <property type="nucleotide sequence ID" value="NM_001321104.2"/>
</dbReference>
<dbReference type="RefSeq" id="NP_001308034.1">
    <property type="nucleotide sequence ID" value="NM_001321105.1"/>
</dbReference>
<dbReference type="RefSeq" id="NP_001308035.1">
    <molecule id="Q9Y6M7-12"/>
    <property type="nucleotide sequence ID" value="NM_001321106.2"/>
</dbReference>
<dbReference type="RefSeq" id="NP_001308036.1">
    <molecule id="Q9Y6M7-9"/>
    <property type="nucleotide sequence ID" value="NM_001321107.2"/>
</dbReference>
<dbReference type="RefSeq" id="NP_001308037.1">
    <molecule id="Q9Y6M7-13"/>
    <property type="nucleotide sequence ID" value="NM_001321108.2"/>
</dbReference>
<dbReference type="RefSeq" id="NP_003606.3">
    <molecule id="Q9Y6M7-1"/>
    <property type="nucleotide sequence ID" value="NM_003615.4"/>
</dbReference>
<dbReference type="RefSeq" id="XP_016863017.1">
    <molecule id="Q9Y6M7-5"/>
    <property type="nucleotide sequence ID" value="XM_017007528.1"/>
</dbReference>
<dbReference type="RefSeq" id="XP_016863018.1">
    <molecule id="Q9Y6M7-5"/>
    <property type="nucleotide sequence ID" value="XM_017007529.1"/>
</dbReference>
<dbReference type="RefSeq" id="XP_047305204.1">
    <molecule id="Q9Y6M7-14"/>
    <property type="nucleotide sequence ID" value="XM_047449248.1"/>
</dbReference>
<dbReference type="RefSeq" id="XP_054204442.1">
    <molecule id="Q9Y6M7-5"/>
    <property type="nucleotide sequence ID" value="XM_054348467.1"/>
</dbReference>
<dbReference type="RefSeq" id="XP_054204443.1">
    <molecule id="Q9Y6M7-5"/>
    <property type="nucleotide sequence ID" value="XM_054348468.1"/>
</dbReference>
<dbReference type="RefSeq" id="XP_054204444.1">
    <molecule id="Q9Y6M7-14"/>
    <property type="nucleotide sequence ID" value="XM_054348469.1"/>
</dbReference>
<dbReference type="SMR" id="Q9Y6M7"/>
<dbReference type="BioGRID" id="114876">
    <property type="interactions" value="200"/>
</dbReference>
<dbReference type="FunCoup" id="Q9Y6M7">
    <property type="interactions" value="1357"/>
</dbReference>
<dbReference type="IntAct" id="Q9Y6M7">
    <property type="interactions" value="87"/>
</dbReference>
<dbReference type="MINT" id="Q9Y6M7"/>
<dbReference type="STRING" id="9606.ENSP00000390394"/>
<dbReference type="ChEMBL" id="CHEMBL3774290"/>
<dbReference type="DrugBank" id="DB01390">
    <property type="generic name" value="Sodium bicarbonate"/>
</dbReference>
<dbReference type="TCDB" id="2.A.31.2.11">
    <property type="family name" value="the anion exchanger (ae) family"/>
</dbReference>
<dbReference type="GlyCosmos" id="Q9Y6M7">
    <property type="glycosylation" value="7 sites, No reported glycans"/>
</dbReference>
<dbReference type="GlyGen" id="Q9Y6M7">
    <property type="glycosylation" value="11 sites, 10 N-linked glycans (5 sites), 1 O-linked glycan (1 site)"/>
</dbReference>
<dbReference type="iPTMnet" id="Q9Y6M7"/>
<dbReference type="PhosphoSitePlus" id="Q9Y6M7"/>
<dbReference type="SwissPalm" id="Q9Y6M7"/>
<dbReference type="BioMuta" id="SLC4A7"/>
<dbReference type="DMDM" id="229462789"/>
<dbReference type="jPOST" id="Q9Y6M7"/>
<dbReference type="MassIVE" id="Q9Y6M7"/>
<dbReference type="PaxDb" id="9606-ENSP00000295736"/>
<dbReference type="PeptideAtlas" id="Q9Y6M7"/>
<dbReference type="ProteomicsDB" id="12778"/>
<dbReference type="ProteomicsDB" id="3404"/>
<dbReference type="ProteomicsDB" id="5941"/>
<dbReference type="ProteomicsDB" id="5942"/>
<dbReference type="ProteomicsDB" id="6243"/>
<dbReference type="ProteomicsDB" id="6244"/>
<dbReference type="ProteomicsDB" id="86734">
    <molecule id="Q9Y6M7-1"/>
</dbReference>
<dbReference type="ProteomicsDB" id="86735">
    <molecule id="Q9Y6M7-2"/>
</dbReference>
<dbReference type="ProteomicsDB" id="86736">
    <molecule id="Q9Y6M7-3"/>
</dbReference>
<dbReference type="ProteomicsDB" id="86737">
    <molecule id="Q9Y6M7-4"/>
</dbReference>
<dbReference type="ProteomicsDB" id="86738">
    <molecule id="Q9Y6M7-5"/>
</dbReference>
<dbReference type="Pumba" id="Q9Y6M7"/>
<dbReference type="Antibodypedia" id="45253">
    <property type="antibodies" value="176 antibodies from 25 providers"/>
</dbReference>
<dbReference type="DNASU" id="9497"/>
<dbReference type="Ensembl" id="ENST00000295736.9">
    <molecule id="Q9Y6M7-1"/>
    <property type="protein sequence ID" value="ENSP00000295736.5"/>
    <property type="gene ID" value="ENSG00000033867.18"/>
</dbReference>
<dbReference type="Ensembl" id="ENST00000428386.5">
    <molecule id="Q9Y6M7-2"/>
    <property type="protein sequence ID" value="ENSP00000416368.1"/>
    <property type="gene ID" value="ENSG00000033867.18"/>
</dbReference>
<dbReference type="Ensembl" id="ENST00000437179.5">
    <molecule id="Q9Y6M7-9"/>
    <property type="protein sequence ID" value="ENSP00000394252.1"/>
    <property type="gene ID" value="ENSG00000033867.18"/>
</dbReference>
<dbReference type="Ensembl" id="ENST00000437266.5">
    <molecule id="Q9Y6M7-11"/>
    <property type="protein sequence ID" value="ENSP00000409418.1"/>
    <property type="gene ID" value="ENSG00000033867.18"/>
</dbReference>
<dbReference type="Ensembl" id="ENST00000438530.5">
    <molecule id="Q9Y6M7-10"/>
    <property type="protein sequence ID" value="ENSP00000407304.1"/>
    <property type="gene ID" value="ENSG00000033867.18"/>
</dbReference>
<dbReference type="Ensembl" id="ENST00000440156.5">
    <molecule id="Q9Y6M7-8"/>
    <property type="protein sequence ID" value="ENSP00000414797.1"/>
    <property type="gene ID" value="ENSG00000033867.18"/>
</dbReference>
<dbReference type="Ensembl" id="ENST00000446700.5">
    <molecule id="Q9Y6M7-12"/>
    <property type="protein sequence ID" value="ENSP00000406605.1"/>
    <property type="gene ID" value="ENSG00000033867.18"/>
</dbReference>
<dbReference type="Ensembl" id="ENST00000454389.6">
    <molecule id="Q9Y6M7-7"/>
    <property type="protein sequence ID" value="ENSP00000390394.1"/>
    <property type="gene ID" value="ENSG00000033867.18"/>
</dbReference>
<dbReference type="Ensembl" id="ENST00000455077.5">
    <molecule id="Q9Y6M7-6"/>
    <property type="protein sequence ID" value="ENSP00000407382.1"/>
    <property type="gene ID" value="ENSG00000033867.18"/>
</dbReference>
<dbReference type="Ensembl" id="ENST00000457377.5">
    <molecule id="Q9Y6M7-11"/>
    <property type="protein sequence ID" value="ENSP00000408323.1"/>
    <property type="gene ID" value="ENSG00000033867.18"/>
</dbReference>
<dbReference type="GeneID" id="9497"/>
<dbReference type="KEGG" id="hsa:9497"/>
<dbReference type="MANE-Select" id="ENST00000454389.6">
    <molecule id="Q9Y6M7-7"/>
    <property type="protein sequence ID" value="ENSP00000390394.1"/>
    <property type="RefSeq nucleotide sequence ID" value="NM_001321103.2"/>
    <property type="RefSeq protein sequence ID" value="NP_001308032.1"/>
</dbReference>
<dbReference type="UCSC" id="uc003cdu.6">
    <molecule id="Q9Y6M7-1"/>
    <property type="organism name" value="human"/>
</dbReference>
<dbReference type="AGR" id="HGNC:11033"/>
<dbReference type="CTD" id="9497"/>
<dbReference type="DisGeNET" id="9497"/>
<dbReference type="GeneCards" id="SLC4A7"/>
<dbReference type="HGNC" id="HGNC:11033">
    <property type="gene designation" value="SLC4A7"/>
</dbReference>
<dbReference type="HPA" id="ENSG00000033867">
    <property type="expression patterns" value="Tissue enhanced (intestine, retina)"/>
</dbReference>
<dbReference type="MIM" id="603353">
    <property type="type" value="gene"/>
</dbReference>
<dbReference type="neXtProt" id="NX_Q9Y6M7"/>
<dbReference type="OpenTargets" id="ENSG00000033867"/>
<dbReference type="PharmGKB" id="PA35899"/>
<dbReference type="VEuPathDB" id="HostDB:ENSG00000033867"/>
<dbReference type="eggNOG" id="KOG1172">
    <property type="taxonomic scope" value="Eukaryota"/>
</dbReference>
<dbReference type="GeneTree" id="ENSGT00940000157045"/>
<dbReference type="HOGENOM" id="CLU_002289_0_0_1"/>
<dbReference type="InParanoid" id="Q9Y6M7"/>
<dbReference type="OMA" id="FCVAVRY"/>
<dbReference type="OrthoDB" id="1735926at2759"/>
<dbReference type="PAN-GO" id="Q9Y6M7">
    <property type="GO annotations" value="8 GO annotations based on evolutionary models"/>
</dbReference>
<dbReference type="PhylomeDB" id="Q9Y6M7"/>
<dbReference type="TreeFam" id="TF313630"/>
<dbReference type="PathwayCommons" id="Q9Y6M7"/>
<dbReference type="Reactome" id="R-HSA-425381">
    <property type="pathway name" value="Bicarbonate transporters"/>
</dbReference>
<dbReference type="Reactome" id="R-HSA-9013405">
    <property type="pathway name" value="RHOD GTPase cycle"/>
</dbReference>
<dbReference type="Reactome" id="R-HSA-9013406">
    <property type="pathway name" value="RHOQ GTPase cycle"/>
</dbReference>
<dbReference type="Reactome" id="R-HSA-9013407">
    <property type="pathway name" value="RHOH GTPase cycle"/>
</dbReference>
<dbReference type="Reactome" id="R-HSA-9013409">
    <property type="pathway name" value="RHOJ GTPase cycle"/>
</dbReference>
<dbReference type="Reactome" id="R-HSA-9035034">
    <property type="pathway name" value="RHOF GTPase cycle"/>
</dbReference>
<dbReference type="SignaLink" id="Q9Y6M7"/>
<dbReference type="BioGRID-ORCS" id="9497">
    <property type="hits" value="251 hits in 1169 CRISPR screens"/>
</dbReference>
<dbReference type="ChiTaRS" id="SLC4A7">
    <property type="organism name" value="human"/>
</dbReference>
<dbReference type="GeneWiki" id="SLC4A7"/>
<dbReference type="GenomeRNAi" id="9497"/>
<dbReference type="Pharos" id="Q9Y6M7">
    <property type="development level" value="Tbio"/>
</dbReference>
<dbReference type="PRO" id="PR:Q9Y6M7"/>
<dbReference type="Proteomes" id="UP000005640">
    <property type="component" value="Chromosome 3"/>
</dbReference>
<dbReference type="RNAct" id="Q9Y6M7">
    <property type="molecule type" value="protein"/>
</dbReference>
<dbReference type="Bgee" id="ENSG00000033867">
    <property type="expression patterns" value="Expressed in oocyte and 197 other cell types or tissues"/>
</dbReference>
<dbReference type="ExpressionAtlas" id="Q9Y6M7">
    <property type="expression patterns" value="baseline and differential"/>
</dbReference>
<dbReference type="GO" id="GO:0016324">
    <property type="term" value="C:apical plasma membrane"/>
    <property type="evidence" value="ECO:0000318"/>
    <property type="project" value="GO_Central"/>
</dbReference>
<dbReference type="GO" id="GO:0016323">
    <property type="term" value="C:basolateral plasma membrane"/>
    <property type="evidence" value="ECO:0000314"/>
    <property type="project" value="ARUK-UCL"/>
</dbReference>
<dbReference type="GO" id="GO:0016020">
    <property type="term" value="C:membrane"/>
    <property type="evidence" value="ECO:0000314"/>
    <property type="project" value="ARUK-UCL"/>
</dbReference>
<dbReference type="GO" id="GO:0005886">
    <property type="term" value="C:plasma membrane"/>
    <property type="evidence" value="ECO:0000314"/>
    <property type="project" value="UniProtKB"/>
</dbReference>
<dbReference type="GO" id="GO:0032420">
    <property type="term" value="C:stereocilium"/>
    <property type="evidence" value="ECO:0007669"/>
    <property type="project" value="UniProtKB-SubCell"/>
</dbReference>
<dbReference type="GO" id="GO:0008509">
    <property type="term" value="F:monoatomic anion transmembrane transporter activity"/>
    <property type="evidence" value="ECO:0007669"/>
    <property type="project" value="InterPro"/>
</dbReference>
<dbReference type="GO" id="GO:0008510">
    <property type="term" value="F:sodium:bicarbonate symporter activity"/>
    <property type="evidence" value="ECO:0000314"/>
    <property type="project" value="UniProtKB"/>
</dbReference>
<dbReference type="GO" id="GO:0005452">
    <property type="term" value="F:solute:inorganic anion antiporter activity"/>
    <property type="evidence" value="ECO:0007669"/>
    <property type="project" value="InterPro"/>
</dbReference>
<dbReference type="GO" id="GO:0060117">
    <property type="term" value="P:auditory receptor cell development"/>
    <property type="evidence" value="ECO:0000318"/>
    <property type="project" value="GO_Central"/>
</dbReference>
<dbReference type="GO" id="GO:0015701">
    <property type="term" value="P:bicarbonate transport"/>
    <property type="evidence" value="ECO:0000318"/>
    <property type="project" value="GO_Central"/>
</dbReference>
<dbReference type="GO" id="GO:0071363">
    <property type="term" value="P:cellular response to growth factor stimulus"/>
    <property type="evidence" value="ECO:0000314"/>
    <property type="project" value="UniProtKB"/>
</dbReference>
<dbReference type="GO" id="GO:0090383">
    <property type="term" value="P:phagosome acidification"/>
    <property type="evidence" value="ECO:0000314"/>
    <property type="project" value="UniProtKB"/>
</dbReference>
<dbReference type="GO" id="GO:0006164">
    <property type="term" value="P:purine nucleotide biosynthetic process"/>
    <property type="evidence" value="ECO:0000315"/>
    <property type="project" value="UniProtKB"/>
</dbReference>
<dbReference type="GO" id="GO:0006221">
    <property type="term" value="P:pyrimidine nucleotide biosynthetic process"/>
    <property type="evidence" value="ECO:0000315"/>
    <property type="project" value="UniProtKB"/>
</dbReference>
<dbReference type="GO" id="GO:0051453">
    <property type="term" value="P:regulation of intracellular pH"/>
    <property type="evidence" value="ECO:0000318"/>
    <property type="project" value="GO_Central"/>
</dbReference>
<dbReference type="GO" id="GO:0055085">
    <property type="term" value="P:transmembrane transport"/>
    <property type="evidence" value="ECO:0000318"/>
    <property type="project" value="GO_Central"/>
</dbReference>
<dbReference type="FunFam" id="1.10.287.570:FF:000001">
    <property type="entry name" value="Anion exchange protein"/>
    <property type="match status" value="1"/>
</dbReference>
<dbReference type="FunFam" id="3.40.930.10:FF:000001">
    <property type="entry name" value="Anion exchange protein"/>
    <property type="match status" value="1"/>
</dbReference>
<dbReference type="Gene3D" id="1.10.287.570">
    <property type="entry name" value="Helical hairpin bin"/>
    <property type="match status" value="1"/>
</dbReference>
<dbReference type="Gene3D" id="3.40.930.10">
    <property type="entry name" value="Mannitol-specific EII, Chain A"/>
    <property type="match status" value="1"/>
</dbReference>
<dbReference type="InterPro" id="IPR013769">
    <property type="entry name" value="Band3_cytoplasmic_dom"/>
</dbReference>
<dbReference type="InterPro" id="IPR011531">
    <property type="entry name" value="HCO3_transpt-like_TM_dom"/>
</dbReference>
<dbReference type="InterPro" id="IPR003020">
    <property type="entry name" value="HCO3_transpt_euk"/>
</dbReference>
<dbReference type="InterPro" id="IPR016152">
    <property type="entry name" value="PTrfase/Anion_transptr"/>
</dbReference>
<dbReference type="NCBIfam" id="TIGR00834">
    <property type="entry name" value="ae"/>
    <property type="match status" value="1"/>
</dbReference>
<dbReference type="PANTHER" id="PTHR11453">
    <property type="entry name" value="ANION EXCHANGE PROTEIN"/>
    <property type="match status" value="1"/>
</dbReference>
<dbReference type="PANTHER" id="PTHR11453:SF105">
    <property type="entry name" value="SODIUM BICARBONATE COTRANSPORTER 3"/>
    <property type="match status" value="1"/>
</dbReference>
<dbReference type="Pfam" id="PF07565">
    <property type="entry name" value="Band_3_cyto"/>
    <property type="match status" value="2"/>
</dbReference>
<dbReference type="Pfam" id="PF00955">
    <property type="entry name" value="HCO3_cotransp"/>
    <property type="match status" value="1"/>
</dbReference>
<dbReference type="PRINTS" id="PR01231">
    <property type="entry name" value="HCO3TRNSPORT"/>
</dbReference>
<dbReference type="SUPFAM" id="SSF55804">
    <property type="entry name" value="Phoshotransferase/anion transport protein"/>
    <property type="match status" value="2"/>
</dbReference>
<name>S4A7_HUMAN</name>
<feature type="chain" id="PRO_0000079233" description="Sodium bicarbonate cotransporter 3">
    <location>
        <begin position="1"/>
        <end position="1214"/>
    </location>
</feature>
<feature type="topological domain" description="Extracellular" evidence="4">
    <location>
        <begin position="1"/>
        <end position="608"/>
    </location>
</feature>
<feature type="transmembrane region" description="Helical" evidence="4">
    <location>
        <begin position="609"/>
        <end position="629"/>
    </location>
</feature>
<feature type="topological domain" description="Cytoplasmic" evidence="4">
    <location>
        <begin position="630"/>
        <end position="637"/>
    </location>
</feature>
<feature type="transmembrane region" description="Helical" evidence="4">
    <location>
        <begin position="638"/>
        <end position="658"/>
    </location>
</feature>
<feature type="topological domain" description="Extracellular" evidence="4">
    <location>
        <begin position="659"/>
        <end position="695"/>
    </location>
</feature>
<feature type="transmembrane region" description="Helical" evidence="4">
    <location>
        <begin position="696"/>
        <end position="716"/>
    </location>
</feature>
<feature type="topological domain" description="Cytoplasmic" evidence="4">
    <location>
        <begin position="717"/>
        <end position="725"/>
    </location>
</feature>
<feature type="transmembrane region" description="Helical" evidence="4">
    <location>
        <begin position="726"/>
        <end position="746"/>
    </location>
</feature>
<feature type="topological domain" description="Extracellular" evidence="4">
    <location>
        <begin position="747"/>
        <end position="817"/>
    </location>
</feature>
<feature type="transmembrane region" description="Helical" evidence="4">
    <location>
        <begin position="818"/>
        <end position="838"/>
    </location>
</feature>
<feature type="topological domain" description="Cytoplasmic" evidence="4">
    <location>
        <begin position="839"/>
        <end position="861"/>
    </location>
</feature>
<feature type="transmembrane region" description="Helical" evidence="4">
    <location>
        <begin position="862"/>
        <end position="882"/>
    </location>
</feature>
<feature type="topological domain" description="Extracellular" evidence="4">
    <location>
        <begin position="883"/>
        <end position="908"/>
    </location>
</feature>
<feature type="transmembrane region" description="Helical" evidence="4">
    <location>
        <begin position="909"/>
        <end position="929"/>
    </location>
</feature>
<feature type="topological domain" description="Cytoplasmic" evidence="4">
    <location>
        <begin position="930"/>
        <end position="954"/>
    </location>
</feature>
<feature type="transmembrane region" description="Helical" evidence="4">
    <location>
        <begin position="955"/>
        <end position="975"/>
    </location>
</feature>
<feature type="topological domain" description="Extracellular" evidence="4">
    <location>
        <begin position="976"/>
        <end position="1011"/>
    </location>
</feature>
<feature type="transmembrane region" description="Helical" evidence="4">
    <location>
        <begin position="1012"/>
        <end position="1032"/>
    </location>
</feature>
<feature type="topological domain" description="Cytoplasmic" evidence="4">
    <location>
        <begin position="1033"/>
        <end position="1034"/>
    </location>
</feature>
<feature type="transmembrane region" description="Helical" evidence="4">
    <location>
        <begin position="1035"/>
        <end position="1055"/>
    </location>
</feature>
<feature type="topological domain" description="Extracellular" evidence="4">
    <location>
        <begin position="1056"/>
        <end position="1092"/>
    </location>
</feature>
<feature type="transmembrane region" description="Helical" evidence="4">
    <location>
        <begin position="1093"/>
        <end position="1113"/>
    </location>
</feature>
<feature type="topological domain" description="Cytoplasmic" evidence="4">
    <location>
        <begin position="1114"/>
        <end position="1214"/>
    </location>
</feature>
<feature type="region of interest" description="Disordered" evidence="5">
    <location>
        <begin position="1"/>
        <end position="22"/>
    </location>
</feature>
<feature type="region of interest" description="Disordered" evidence="5">
    <location>
        <begin position="52"/>
        <end position="93"/>
    </location>
</feature>
<feature type="region of interest" description="Disordered" evidence="5">
    <location>
        <begin position="289"/>
        <end position="346"/>
    </location>
</feature>
<feature type="region of interest" description="Disordered" evidence="5">
    <location>
        <begin position="362"/>
        <end position="408"/>
    </location>
</feature>
<feature type="region of interest" description="Disordered" evidence="5">
    <location>
        <begin position="552"/>
        <end position="572"/>
    </location>
</feature>
<feature type="region of interest" description="Essential for cell membrane localization and transport activity" evidence="9">
    <location>
        <begin position="1127"/>
        <end position="1214"/>
    </location>
</feature>
<feature type="region of interest" description="CA2-binding">
    <location>
        <begin position="1134"/>
        <end position="1136"/>
    </location>
</feature>
<feature type="region of interest" description="Disordered" evidence="5">
    <location>
        <begin position="1144"/>
        <end position="1169"/>
    </location>
</feature>
<feature type="short sequence motif" description="PDZ-binding">
    <location>
        <begin position="1211"/>
        <end position="1214"/>
    </location>
</feature>
<feature type="compositionally biased region" description="Basic and acidic residues" evidence="5">
    <location>
        <begin position="1"/>
        <end position="12"/>
    </location>
</feature>
<feature type="compositionally biased region" description="Basic residues" evidence="5">
    <location>
        <begin position="55"/>
        <end position="72"/>
    </location>
</feature>
<feature type="compositionally biased region" description="Basic and acidic residues" evidence="5">
    <location>
        <begin position="73"/>
        <end position="85"/>
    </location>
</feature>
<feature type="compositionally biased region" description="Pro residues" evidence="5">
    <location>
        <begin position="303"/>
        <end position="313"/>
    </location>
</feature>
<feature type="compositionally biased region" description="Low complexity" evidence="5">
    <location>
        <begin position="314"/>
        <end position="332"/>
    </location>
</feature>
<feature type="compositionally biased region" description="Polar residues" evidence="5">
    <location>
        <begin position="379"/>
        <end position="392"/>
    </location>
</feature>
<feature type="compositionally biased region" description="Basic and acidic residues" evidence="5">
    <location>
        <begin position="563"/>
        <end position="572"/>
    </location>
</feature>
<feature type="compositionally biased region" description="Basic and acidic residues" evidence="5">
    <location>
        <begin position="1144"/>
        <end position="1162"/>
    </location>
</feature>
<feature type="modified residue" description="Phosphoserine" evidence="1">
    <location>
        <position position="52"/>
    </location>
</feature>
<feature type="modified residue" description="Phosphoserine" evidence="29">
    <location>
        <position position="55"/>
    </location>
</feature>
<feature type="modified residue" description="Phosphoserine" evidence="2">
    <location>
        <position position="84"/>
    </location>
</feature>
<feature type="modified residue" description="Phosphoserine" evidence="2">
    <location>
        <position position="150"/>
    </location>
</feature>
<feature type="modified residue" description="Phosphoserine" evidence="1">
    <location>
        <position position="233"/>
    </location>
</feature>
<feature type="modified residue" description="Phosphoserine" evidence="28 29">
    <location>
        <position position="242"/>
    </location>
</feature>
<feature type="modified residue" description="Phosphoserine" evidence="1">
    <location>
        <position position="382"/>
    </location>
</feature>
<feature type="modified residue" description="Phosphoserine" evidence="2">
    <location>
        <position position="400"/>
    </location>
</feature>
<feature type="modified residue" description="Phosphoserine" evidence="25 28 29">
    <location>
        <position position="403"/>
    </location>
</feature>
<feature type="modified residue" description="Phosphoserine" evidence="29">
    <location>
        <position position="407"/>
    </location>
</feature>
<feature type="modified residue" description="Phosphoserine" evidence="29">
    <location>
        <position position="556"/>
    </location>
</feature>
<feature type="modified residue" description="Phosphothreonine" evidence="29">
    <location>
        <position position="557"/>
    </location>
</feature>
<feature type="modified residue" description="Phosphothreonine" evidence="24 26">
    <location>
        <position position="1167"/>
    </location>
</feature>
<feature type="modified residue" description="Phosphoserine" evidence="24 26 27">
    <location>
        <position position="1176"/>
    </location>
</feature>
<feature type="modified residue" description="Phosphoserine" evidence="25">
    <location>
        <position position="1213"/>
    </location>
</feature>
<feature type="glycosylation site" description="N-linked (GlcNAc...) asparagine" evidence="4">
    <location>
        <position position="171"/>
    </location>
</feature>
<feature type="glycosylation site" description="N-linked (GlcNAc...) asparagine" evidence="4">
    <location>
        <position position="269"/>
    </location>
</feature>
<feature type="glycosylation site" description="N-linked (GlcNAc...) asparagine" evidence="4">
    <location>
        <position position="398"/>
    </location>
</feature>
<feature type="glycosylation site" description="N-linked (GlcNAc...) asparagine" evidence="4">
    <location>
        <position position="406"/>
    </location>
</feature>
<feature type="glycosylation site" description="N-linked (GlcNAc...) asparagine" evidence="12">
    <location>
        <position position="776"/>
    </location>
</feature>
<feature type="glycosylation site" description="N-linked (GlcNAc...) asparagine" evidence="12">
    <location>
        <position position="786"/>
    </location>
</feature>
<feature type="glycosylation site" description="N-linked (GlcNAc...) asparagine" evidence="12">
    <location>
        <position position="791"/>
    </location>
</feature>
<feature type="disulfide bond" evidence="3">
    <location>
        <begin position="766"/>
        <end position="768"/>
    </location>
</feature>
<feature type="disulfide bond" evidence="3">
    <location>
        <begin position="802"/>
        <end position="814"/>
    </location>
</feature>
<feature type="splice variant" id="VSP_047838" description="In isoform 5." evidence="18">
    <location>
        <begin position="1"/>
        <end position="450"/>
    </location>
</feature>
<feature type="splice variant" id="VSP_047839" description="In isoform 3 and isoform 4." evidence="19 20">
    <location>
        <begin position="1"/>
        <end position="90"/>
    </location>
</feature>
<feature type="splice variant" id="VSP_047840" description="In isoform 6, isoform 9, isoform 10, isoform 11 and isoform 12." evidence="21">
    <original>MERFRLEKKLP</original>
    <variation>MEADGAGEQMRPLLTR</variation>
    <location>
        <begin position="1"/>
        <end position="11"/>
    </location>
</feature>
<feature type="splice variant" id="VSP_047841" description="In isoform 7, isoform 8, isoform 13 and isoform 14." evidence="21 22">
    <original>MERFRLEKKLP</original>
    <variation>MEADGAGEQMRPLLTRVTSR</variation>
    <location>
        <begin position="1"/>
        <end position="11"/>
    </location>
</feature>
<feature type="splice variant" id="VSP_047842" description="In isoform 3 and isoform 4." evidence="19 20">
    <original>SQRVQFILGTEDDDEEHIPHDLFTEMDE</original>
    <variation>MAVTQFIHFREEIMGNMFFIIIFSTKDK</variation>
    <location>
        <begin position="91"/>
        <end position="118"/>
    </location>
</feature>
<feature type="splice variant" id="VSP_047843" description="In isoform 8, isoform 10 and isoform 12." evidence="21">
    <location>
        <begin position="238"/>
        <end position="250"/>
    </location>
</feature>
<feature type="splice variant" id="VSP_047844" description="In isoform 2, isoform 3, isoform 4, isoform 6, isoform 9, isoform 11, isoform 13 and isoform 14." evidence="17 19 20 21 22">
    <location>
        <begin position="251"/>
        <end position="374"/>
    </location>
</feature>
<feature type="splice variant" id="VSP_047845" description="In isoform 5." evidence="18">
    <original>PAVLLTGLTEVPVPT</original>
    <variation>MEVVEAEKIVLLTSA</variation>
    <location>
        <begin position="451"/>
        <end position="465"/>
    </location>
</feature>
<feature type="splice variant" id="VSP_047846" description="In isoform 10, isoform 11 and isoform 14." evidence="21 22">
    <original>LF</original>
    <variation>VQ</variation>
    <location>
        <begin position="581"/>
        <end position="582"/>
    </location>
</feature>
<feature type="splice variant" id="VSP_047847" description="In isoform 10, isoform 11 and isoform 14." evidence="21 22">
    <location>
        <begin position="583"/>
        <end position="1214"/>
    </location>
</feature>
<feature type="splice variant" id="VSP_047848" description="In isoform 5, isoform 6, isoform 7, isoform 8 and isoform 13." evidence="18 21 22">
    <original>S</original>
    <variation>SVDPSIVNISDEMAKTAQWKALSMNTENAKVTRSNMS</variation>
    <location>
        <position position="1188"/>
    </location>
</feature>
<feature type="splice variant" id="VSP_047849" description="In isoform 3." evidence="19">
    <original>PDKPVSVKISFEDEPRKKYVDAETSL</original>
    <variation>GDPSIGNISDEMAKTAQWKALSMNTENAKVTRSNMSPDKPVSVK</variation>
    <location>
        <begin position="1189"/>
        <end position="1214"/>
    </location>
</feature>
<feature type="sequence variant" id="VAR_055317" description="In dbSNP:rs3755652." evidence="6 16">
    <original>E</original>
    <variation>K</variation>
    <location>
        <position position="326"/>
    </location>
</feature>
<feature type="mutagenesis site" description="Loss of cell membrane localization. Significant reduction in transport activity." evidence="9">
    <location>
        <begin position="1127"/>
        <end position="1214"/>
    </location>
</feature>
<feature type="mutagenesis site" description="Loss of interaction with CA2. Loss of regulation by CA2." evidence="10">
    <original>DD</original>
    <variation>NN</variation>
    <location>
        <begin position="1135"/>
        <end position="1136"/>
    </location>
</feature>
<feature type="mutagenesis site" description="No effect on interaction with CA2. No effect on regulation by CA2." evidence="10">
    <original>DDD</original>
    <variation>NNN</variation>
    <location>
        <begin position="1163"/>
        <end position="1165"/>
    </location>
</feature>
<feature type="mutagenesis site" description="Loss of interaction with ATP6V1B1." evidence="8">
    <original>L</original>
    <variation>G</variation>
    <location>
        <position position="1214"/>
    </location>
</feature>
<feature type="modified residue" description="Phosphoserine" evidence="27">
    <location sequence="Q9Y6M7-2">
        <position position="255"/>
    </location>
</feature>
<feature type="modified residue" description="Phosphoserine" evidence="25 26 27 28">
    <location sequence="Q9Y6M7-2">
        <position position="258"/>
    </location>
</feature>
<feature type="modified residue" description="Phosphoserine" evidence="27">
    <location sequence="Q9Y6M7-3">
        <position position="165"/>
    </location>
</feature>
<feature type="modified residue" description="Phosphoserine" evidence="25 26 27 28">
    <location sequence="Q9Y6M7-3">
        <position position="168"/>
    </location>
</feature>
<feature type="modified residue" description="Phosphoserine" evidence="27 28">
    <location sequence="Q9Y6M7-3">
        <position position="1007"/>
    </location>
</feature>
<feature type="modified residue" description="Phosphoserine" evidence="25 27">
    <location sequence="Q9Y6M7-3">
        <position position="1010"/>
    </location>
</feature>
<feature type="modified residue" description="Phosphoserine" evidence="25">
    <location sequence="Q9Y6M7-3">
        <position position="1016"/>
    </location>
</feature>
<feature type="modified residue" description="Phosphoserine" evidence="27">
    <location sequence="Q9Y6M7-4">
        <position position="165"/>
    </location>
</feature>
<feature type="modified residue" description="Phosphoserine" evidence="25 26 27 28">
    <location sequence="Q9Y6M7-4">
        <position position="168"/>
    </location>
</feature>
<feature type="modified residue" description="Phosphoserine" evidence="26">
    <location sequence="Q9Y6M7-5">
        <position position="742"/>
    </location>
</feature>
<feature type="modified residue" description="Phosphoserine" evidence="27 28">
    <location sequence="Q9Y6M7-5">
        <position position="771"/>
    </location>
</feature>
<feature type="modified residue" description="Phosphoserine" evidence="25 27">
    <location sequence="Q9Y6M7-5">
        <position position="774"/>
    </location>
</feature>
<feature type="modified residue" description="Phosphoserine" evidence="25">
    <location sequence="Q9Y6M7-5">
        <position position="780"/>
    </location>
</feature>
<feature type="region of interest" description="Essential for cell membrane localization and transport activity" evidence="13">
    <location sequence="Q9Y6M7-6">
        <begin position="1008"/>
        <end position="1131"/>
    </location>
</feature>
<feature type="modified residue" description="Phosphoserine" evidence="27">
    <location sequence="Q9Y6M7-6">
        <position position="260"/>
    </location>
</feature>
<feature type="modified residue" description="Phosphoserine" evidence="25 26 27 28">
    <location sequence="Q9Y6M7-6">
        <position position="263"/>
    </location>
</feature>
<feature type="modified residue" description="Phosphoserine" evidence="26">
    <location sequence="Q9Y6M7-6">
        <position position="1073"/>
    </location>
</feature>
<feature type="modified residue" description="Phosphoserine" evidence="27 28">
    <location sequence="Q9Y6M7-6">
        <position position="1102"/>
    </location>
</feature>
<feature type="modified residue" description="Phosphoserine" evidence="25 27">
    <location sequence="Q9Y6M7-6">
        <position position="1105"/>
    </location>
</feature>
<feature type="modified residue" description="Phosphoserine" evidence="25">
    <location sequence="Q9Y6M7-6">
        <position position="1111"/>
    </location>
</feature>
<feature type="mutagenesis site" description="No effect on cell membrane localization. Unable to rescue phagocyte deficient acidification phenotype of SLC4A7 knockout." evidence="13">
    <original>T</original>
    <variation>I</variation>
    <location sequence="Q9Y6M7-6">
        <position position="549"/>
    </location>
</feature>
<feature type="mutagenesis site" description="No effect on cell membrane localization. Unable to rescue phagocyte deficient acidification phenotype of SLC4A7 knockout." evidence="13">
    <original>D</original>
    <variation>A</variation>
    <location sequence="Q9Y6M7-6">
        <position position="811"/>
    </location>
</feature>
<feature type="mutagenesis site" description="Loss of cell membrane localization. Unable to rescue phagocyte deficient acidification phenotype of SLC4A7 knockout." evidence="13">
    <location sequence="Q9Y6M7-6">
        <begin position="1008"/>
        <end position="1131"/>
    </location>
</feature>
<feature type="modified residue" description="Phosphoserine" evidence="26">
    <location sequence="Q9Y6M7-7">
        <position position="1201"/>
    </location>
</feature>
<feature type="modified residue" description="Phosphoserine" evidence="27 28">
    <location sequence="Q9Y6M7-7">
        <position position="1230"/>
    </location>
</feature>
<feature type="modified residue" description="Phosphoserine" evidence="25 27">
    <location sequence="Q9Y6M7-7">
        <position position="1233"/>
    </location>
</feature>
<feature type="modified residue" description="Phosphoserine" evidence="25">
    <location sequence="Q9Y6M7-7">
        <position position="1239"/>
    </location>
</feature>
<feature type="modified residue" description="Phosphoserine" evidence="26">
    <location sequence="Q9Y6M7-8">
        <position position="1188"/>
    </location>
</feature>
<feature type="modified residue" description="Phosphoserine" evidence="27 28">
    <location sequence="Q9Y6M7-8">
        <position position="1217"/>
    </location>
</feature>
<feature type="modified residue" description="Phosphoserine" evidence="25 27">
    <location sequence="Q9Y6M7-8">
        <position position="1220"/>
    </location>
</feature>
<feature type="modified residue" description="Phosphoserine" evidence="25">
    <location sequence="Q9Y6M7-8">
        <position position="1226"/>
    </location>
</feature>
<feature type="modified residue" description="Phosphoserine" evidence="27">
    <location sequence="Q9Y6M7-9">
        <position position="260"/>
    </location>
</feature>
<feature type="modified residue" description="Phosphoserine" evidence="25 26 27 28">
    <location sequence="Q9Y6M7-9">
        <position position="263"/>
    </location>
</feature>
<feature type="modified residue" description="Phosphoserine" evidence="27">
    <location sequence="Q9Y6M7-11">
        <position position="260"/>
    </location>
</feature>
<feature type="modified residue" description="Phosphoserine" evidence="25 26 27 28">
    <location sequence="Q9Y6M7-11">
        <position position="263"/>
    </location>
</feature>
<feature type="modified residue" description="Phosphoserine" evidence="27">
    <location sequence="Q9Y6M7-13">
        <position position="264"/>
    </location>
</feature>
<feature type="modified residue" description="Phosphoserine" evidence="25 26 27 28">
    <location sequence="Q9Y6M7-13">
        <position position="267"/>
    </location>
</feature>
<feature type="modified residue" description="Phosphoserine" evidence="26">
    <location sequence="Q9Y6M7-13">
        <position position="1077"/>
    </location>
</feature>
<feature type="modified residue" description="Phosphoserine" evidence="27 28">
    <location sequence="Q9Y6M7-13">
        <position position="1106"/>
    </location>
</feature>
<feature type="modified residue" description="Phosphoserine" evidence="25 27">
    <location sequence="Q9Y6M7-13">
        <position position="1109"/>
    </location>
</feature>
<feature type="modified residue" description="Phosphoserine" evidence="25">
    <location sequence="Q9Y6M7-13">
        <position position="1115"/>
    </location>
</feature>
<feature type="modified residue" description="Phosphoserine" evidence="27">
    <location sequence="Q9Y6M7-14">
        <position position="264"/>
    </location>
</feature>
<feature type="modified residue" description="Phosphoserine" evidence="25 26 27 28">
    <location sequence="Q9Y6M7-14">
        <position position="267"/>
    </location>
</feature>
<protein>
    <recommendedName>
        <fullName>Sodium bicarbonate cotransporter 3</fullName>
    </recommendedName>
    <alternativeName>
        <fullName>Electroneutral Na/HCO(3) cotransporter</fullName>
    </alternativeName>
    <alternativeName>
        <fullName>Sodium bicarbonate cotransporter 2</fullName>
    </alternativeName>
    <alternativeName>
        <fullName>Sodium bicarbonate cotransporter 2b</fullName>
        <shortName>Bicarbonate transporter</shortName>
    </alternativeName>
    <alternativeName>
        <fullName>Solute carrier family 4 member 7</fullName>
    </alternativeName>
</protein>
<accession>Q9Y6M7</accession>
<accession>A6NIA8</accession>
<accession>B2CI53</accession>
<accession>B5M449</accession>
<accession>B5M451</accession>
<accession>B5M452</accession>
<accession>B5M453</accession>
<accession>B6DY52</accession>
<accession>B6DY53</accession>
<accession>C9JST9</accession>
<accession>D3K174</accession>
<accession>D3K175</accession>
<accession>O60350</accession>
<accession>Q6AHZ9</accession>
<accession>Q9HC88</accession>
<accession>Q9UIB9</accession>
<organism>
    <name type="scientific">Homo sapiens</name>
    <name type="common">Human</name>
    <dbReference type="NCBI Taxonomy" id="9606"/>
    <lineage>
        <taxon>Eukaryota</taxon>
        <taxon>Metazoa</taxon>
        <taxon>Chordata</taxon>
        <taxon>Craniata</taxon>
        <taxon>Vertebrata</taxon>
        <taxon>Euteleostomi</taxon>
        <taxon>Mammalia</taxon>
        <taxon>Eutheria</taxon>
        <taxon>Euarchontoglires</taxon>
        <taxon>Primates</taxon>
        <taxon>Haplorrhini</taxon>
        <taxon>Catarrhini</taxon>
        <taxon>Hominidae</taxon>
        <taxon>Homo</taxon>
    </lineage>
</organism>
<reference key="1">
    <citation type="journal article" date="1998" name="Biochem. Biophys. Res. Commun.">
        <title>Molecular cloning of a new sodium bicarbonate cotransporter cDNA from human retina.</title>
        <authorList>
            <person name="Ishibashi K."/>
            <person name="Sasaki S."/>
            <person name="Marumo F."/>
        </authorList>
    </citation>
    <scope>NUCLEOTIDE SEQUENCE [MRNA] (ISOFORM 3)</scope>
    <scope>TISSUE SPECIFICITY</scope>
    <source>
        <tissue>Retina</tissue>
    </source>
</reference>
<reference key="2">
    <citation type="journal article" date="1999" name="J. Biol. Chem.">
        <title>Cloning, tissue distribution, genomic organization, and functional characterization of NBC3, a new member of the sodium bicarbonate cotransporter family.</title>
        <authorList>
            <person name="Pushkin A."/>
            <person name="Abuladze N."/>
            <person name="Lee I."/>
            <person name="Newman D."/>
            <person name="Hwang J."/>
            <person name="Kurtz I."/>
        </authorList>
    </citation>
    <scope>NUCLEOTIDE SEQUENCE [MRNA] (ISOFORMS 1 AND 2)</scope>
    <scope>FUNCTION</scope>
    <scope>BIOPHYSICOCHEMICAL PROPERTIES</scope>
    <scope>ACTIVITY REGULATION</scope>
    <scope>VARIANT LYS-326</scope>
    <scope>TRANSPORTER ACTIVITY</scope>
    <scope>TISSUE SPECIFICITY</scope>
    <source>
        <tissue>Kidney</tissue>
        <tissue>Skeletal muscle</tissue>
    </source>
</reference>
<reference key="3">
    <citation type="submission" date="1998-03" db="EMBL/GenBank/DDBJ databases">
        <title>Cloning of a HCO3 transporter, NT2-NBC, from human brain, similar to both the Anion exchangers (AEs) and the Na/Bicarbonate Cotransporters (NBCs).</title>
        <authorList>
            <person name="Romero M.F."/>
        </authorList>
    </citation>
    <scope>NUCLEOTIDE SEQUENCE [MRNA] (ISOFORM 4)</scope>
    <source>
        <tissue>Neuroepithelium</tissue>
    </source>
</reference>
<reference key="4">
    <citation type="submission" date="2008-07" db="EMBL/GenBank/DDBJ databases">
        <title>Cloning and identification of novel human NBCn1 splice variants.</title>
        <authorList>
            <person name="Liu Y."/>
            <person name="Chen L.-M."/>
            <person name="Parker M.D."/>
            <person name="Boron W.F."/>
        </authorList>
    </citation>
    <scope>NUCLEOTIDE SEQUENCE [MRNA] (ISOFORMS 6; 7; 8; 9; 10; 11 AND 12)</scope>
    <scope>ALTERNATIVE SPLICING</scope>
    <scope>VARIANT LYS-326</scope>
    <source>
        <tissue>Brain</tissue>
        <tissue>Heart</tissue>
        <tissue>Liver</tissue>
        <tissue>Skeletal muscle</tissue>
    </source>
</reference>
<reference key="5">
    <citation type="submission" date="2009-12" db="EMBL/GenBank/DDBJ databases">
        <title>Cloning and identification of two novel human NBCn1 splice variants.</title>
        <authorList>
            <person name="Liu Y."/>
            <person name="Chen L."/>
            <person name="Parker M.D."/>
            <person name="Boron W.F."/>
        </authorList>
    </citation>
    <scope>NUCLEOTIDE SEQUENCE [MRNA] (ISOFORMS 13 AND 14)</scope>
    <source>
        <tissue>Brain</tissue>
    </source>
</reference>
<reference key="6">
    <citation type="journal article" date="2007" name="BMC Genomics">
        <title>The full-ORF clone resource of the German cDNA consortium.</title>
        <authorList>
            <person name="Bechtel S."/>
            <person name="Rosenfelder H."/>
            <person name="Duda A."/>
            <person name="Schmidt C.P."/>
            <person name="Ernst U."/>
            <person name="Wellenreuther R."/>
            <person name="Mehrle A."/>
            <person name="Schuster C."/>
            <person name="Bahr A."/>
            <person name="Bloecker H."/>
            <person name="Heubner D."/>
            <person name="Hoerlein A."/>
            <person name="Michel G."/>
            <person name="Wedler H."/>
            <person name="Koehrer K."/>
            <person name="Ottenwaelder B."/>
            <person name="Poustka A."/>
            <person name="Wiemann S."/>
            <person name="Schupp I."/>
        </authorList>
    </citation>
    <scope>NUCLEOTIDE SEQUENCE [LARGE SCALE MRNA] (ISOFORM 5)</scope>
    <source>
        <tissue>Cervix</tissue>
    </source>
</reference>
<reference key="7">
    <citation type="journal article" date="2006" name="Nature">
        <title>The DNA sequence, annotation and analysis of human chromosome 3.</title>
        <authorList>
            <person name="Muzny D.M."/>
            <person name="Scherer S.E."/>
            <person name="Kaul R."/>
            <person name="Wang J."/>
            <person name="Yu J."/>
            <person name="Sudbrak R."/>
            <person name="Buhay C.J."/>
            <person name="Chen R."/>
            <person name="Cree A."/>
            <person name="Ding Y."/>
            <person name="Dugan-Rocha S."/>
            <person name="Gill R."/>
            <person name="Gunaratne P."/>
            <person name="Harris R.A."/>
            <person name="Hawes A.C."/>
            <person name="Hernandez J."/>
            <person name="Hodgson A.V."/>
            <person name="Hume J."/>
            <person name="Jackson A."/>
            <person name="Khan Z.M."/>
            <person name="Kovar-Smith C."/>
            <person name="Lewis L.R."/>
            <person name="Lozado R.J."/>
            <person name="Metzker M.L."/>
            <person name="Milosavljevic A."/>
            <person name="Miner G.R."/>
            <person name="Morgan M.B."/>
            <person name="Nazareth L.V."/>
            <person name="Scott G."/>
            <person name="Sodergren E."/>
            <person name="Song X.-Z."/>
            <person name="Steffen D."/>
            <person name="Wei S."/>
            <person name="Wheeler D.A."/>
            <person name="Wright M.W."/>
            <person name="Worley K.C."/>
            <person name="Yuan Y."/>
            <person name="Zhang Z."/>
            <person name="Adams C.Q."/>
            <person name="Ansari-Lari M.A."/>
            <person name="Ayele M."/>
            <person name="Brown M.J."/>
            <person name="Chen G."/>
            <person name="Chen Z."/>
            <person name="Clendenning J."/>
            <person name="Clerc-Blankenburg K.P."/>
            <person name="Chen R."/>
            <person name="Chen Z."/>
            <person name="Davis C."/>
            <person name="Delgado O."/>
            <person name="Dinh H.H."/>
            <person name="Dong W."/>
            <person name="Draper H."/>
            <person name="Ernst S."/>
            <person name="Fu G."/>
            <person name="Gonzalez-Garay M.L."/>
            <person name="Garcia D.K."/>
            <person name="Gillett W."/>
            <person name="Gu J."/>
            <person name="Hao B."/>
            <person name="Haugen E."/>
            <person name="Havlak P."/>
            <person name="He X."/>
            <person name="Hennig S."/>
            <person name="Hu S."/>
            <person name="Huang W."/>
            <person name="Jackson L.R."/>
            <person name="Jacob L.S."/>
            <person name="Kelly S.H."/>
            <person name="Kube M."/>
            <person name="Levy R."/>
            <person name="Li Z."/>
            <person name="Liu B."/>
            <person name="Liu J."/>
            <person name="Liu W."/>
            <person name="Lu J."/>
            <person name="Maheshwari M."/>
            <person name="Nguyen B.-V."/>
            <person name="Okwuonu G.O."/>
            <person name="Palmeiri A."/>
            <person name="Pasternak S."/>
            <person name="Perez L.M."/>
            <person name="Phelps K.A."/>
            <person name="Plopper F.J."/>
            <person name="Qiang B."/>
            <person name="Raymond C."/>
            <person name="Rodriguez R."/>
            <person name="Saenphimmachak C."/>
            <person name="Santibanez J."/>
            <person name="Shen H."/>
            <person name="Shen Y."/>
            <person name="Subramanian S."/>
            <person name="Tabor P.E."/>
            <person name="Verduzco D."/>
            <person name="Waldron L."/>
            <person name="Wang J."/>
            <person name="Wang J."/>
            <person name="Wang Q."/>
            <person name="Williams G.A."/>
            <person name="Wong G.K.-S."/>
            <person name="Yao Z."/>
            <person name="Zhang J."/>
            <person name="Zhang X."/>
            <person name="Zhao G."/>
            <person name="Zhou J."/>
            <person name="Zhou Y."/>
            <person name="Nelson D."/>
            <person name="Lehrach H."/>
            <person name="Reinhardt R."/>
            <person name="Naylor S.L."/>
            <person name="Yang H."/>
            <person name="Olson M."/>
            <person name="Weinstock G."/>
            <person name="Gibbs R.A."/>
        </authorList>
    </citation>
    <scope>NUCLEOTIDE SEQUENCE [LARGE SCALE GENOMIC DNA]</scope>
</reference>
<reference key="8">
    <citation type="submission" date="2005-07" db="EMBL/GenBank/DDBJ databases">
        <authorList>
            <person name="Mural R.J."/>
            <person name="Istrail S."/>
            <person name="Sutton G.G."/>
            <person name="Florea L."/>
            <person name="Halpern A.L."/>
            <person name="Mobarry C.M."/>
            <person name="Lippert R."/>
            <person name="Walenz B."/>
            <person name="Shatkay H."/>
            <person name="Dew I."/>
            <person name="Miller J.R."/>
            <person name="Flanigan M.J."/>
            <person name="Edwards N.J."/>
            <person name="Bolanos R."/>
            <person name="Fasulo D."/>
            <person name="Halldorsson B.V."/>
            <person name="Hannenhalli S."/>
            <person name="Turner R."/>
            <person name="Yooseph S."/>
            <person name="Lu F."/>
            <person name="Nusskern D.R."/>
            <person name="Shue B.C."/>
            <person name="Zheng X.H."/>
            <person name="Zhong F."/>
            <person name="Delcher A.L."/>
            <person name="Huson D.H."/>
            <person name="Kravitz S.A."/>
            <person name="Mouchard L."/>
            <person name="Reinert K."/>
            <person name="Remington K.A."/>
            <person name="Clark A.G."/>
            <person name="Waterman M.S."/>
            <person name="Eichler E.E."/>
            <person name="Adams M.D."/>
            <person name="Hunkapiller M.W."/>
            <person name="Myers E.W."/>
            <person name="Venter J.C."/>
        </authorList>
    </citation>
    <scope>NUCLEOTIDE SEQUENCE [LARGE SCALE GENOMIC DNA]</scope>
</reference>
<reference key="9">
    <citation type="journal article" date="2002" name="J. Biol. Chem.">
        <title>The cystic fibrosis transmembrane conductance regulator interacts with and regulates the activity of the HCO3- salvage transporter human Na+-HCO3-cotransport isoform 3.</title>
        <authorList>
            <person name="Park M."/>
            <person name="Ko S.B.H."/>
            <person name="Choi J.Y."/>
            <person name="Muallem G."/>
            <person name="Thomas P.J."/>
            <person name="Pushkin A."/>
            <person name="Lee M.-S."/>
            <person name="Kim J.Y."/>
            <person name="Lee M.G."/>
            <person name="Muallem S."/>
            <person name="Kurtz I."/>
        </authorList>
    </citation>
    <scope>FUNCTION</scope>
    <scope>INTERACTION WITH CFTR AND NHERF1</scope>
    <scope>DOMAIN</scope>
    <scope>TRANSPORTER ACTIVITY</scope>
</reference>
<reference key="10">
    <citation type="journal article" date="2003" name="Am. J. Physiol.">
        <title>The COOH termini of NBC3 and the 56-kDa H+-ATPase subunit are PDZ motifs involved in their interaction.</title>
        <authorList>
            <person name="Pushkin A."/>
            <person name="Abuladze N."/>
            <person name="Newman D."/>
            <person name="Muronets V."/>
            <person name="Sassani P."/>
            <person name="Tatishchev S."/>
            <person name="Kurtz I."/>
        </authorList>
    </citation>
    <scope>INTERACTION WITH ATP6V1B1 AND NHERF1</scope>
    <scope>MUTAGENESIS OF LEU-1214</scope>
</reference>
<reference key="11">
    <citation type="journal article" date="2004" name="Am. J. Physiol.">
        <title>Regulation of the human NBC3 Na+/HCO3- cotransporter by carbonic anhydrase II and PKA.</title>
        <authorList>
            <person name="Loiselle F.B."/>
            <person name="Morgan P.E."/>
            <person name="Alvarez B.V."/>
            <person name="Casey J.R."/>
        </authorList>
    </citation>
    <scope>INTERACTION WITH CA2</scope>
    <scope>ACTIVITY REGULATION</scope>
    <scope>MUTAGENESIS OF 1135-ASP-ASP-1136 AND 1163-ASP--ASP-1165</scope>
    <scope>FUNCTION</scope>
    <scope>TRANSPORTER ACTIVITY</scope>
</reference>
<reference key="12">
    <citation type="journal article" date="2004" name="Anal. Chem.">
        <title>Robust phosphoproteomic profiling of tyrosine phosphorylation sites from human T cells using immobilized metal affinity chromatography and tandem mass spectrometry.</title>
        <authorList>
            <person name="Brill L.M."/>
            <person name="Salomon A.R."/>
            <person name="Ficarro S.B."/>
            <person name="Mukherji M."/>
            <person name="Stettler-Gill M."/>
            <person name="Peters E.C."/>
        </authorList>
    </citation>
    <scope>IDENTIFICATION BY MASS SPECTROMETRY [LARGE SCALE ANALYSIS]</scope>
    <source>
        <tissue>Leukemic T-cell</tissue>
    </source>
</reference>
<reference key="13">
    <citation type="journal article" date="2005" name="Hum. Mol. Genet.">
        <title>Scaffold protein harmonin (USH1C) provides molecular links between Usher syndrome type 1 and type 2.</title>
        <authorList>
            <person name="Reiners J."/>
            <person name="van Wijk E."/>
            <person name="Maerker T."/>
            <person name="Zimmermann U."/>
            <person name="Juergens K."/>
            <person name="te Brinke H."/>
            <person name="Overlack N."/>
            <person name="Roepman R."/>
            <person name="Knipper M."/>
            <person name="Kremer H."/>
            <person name="Wolfrum U."/>
        </authorList>
    </citation>
    <scope>INTERACTION WITH USH1C</scope>
</reference>
<reference key="14">
    <citation type="journal article" date="2006" name="Cell">
        <title>Global, in vivo, and site-specific phosphorylation dynamics in signaling networks.</title>
        <authorList>
            <person name="Olsen J.V."/>
            <person name="Blagoev B."/>
            <person name="Gnad F."/>
            <person name="Macek B."/>
            <person name="Kumar C."/>
            <person name="Mortensen P."/>
            <person name="Mann M."/>
        </authorList>
    </citation>
    <scope>IDENTIFICATION BY MASS SPECTROMETRY [LARGE SCALE ANALYSIS]</scope>
    <source>
        <tissue>Cervix carcinoma</tissue>
    </source>
</reference>
<reference key="15">
    <citation type="journal article" date="2003" name="Mol. Membr. Biol.">
        <title>Structural and functional characterization of the human NBC3 sodium/bicarbonate co-transporter carboxyl-terminal cytoplasmic domain.</title>
        <authorList>
            <person name="Loiselle F.B."/>
            <person name="Jaschke P."/>
            <person name="Casey J.R."/>
        </authorList>
    </citation>
    <scope>FUNCTION</scope>
    <scope>TRANSPORTER ACTIVITY</scope>
    <scope>MUTAGENESIS OF 1127-THR--LEU-1214</scope>
    <scope>REGION</scope>
    <scope>SUBCELLULAR LOCATION</scope>
</reference>
<reference key="16">
    <citation type="journal article" date="2008" name="J. Proteome Res.">
        <title>Combining protein-based IMAC, peptide-based IMAC, and MudPIT for efficient phosphoproteomic analysis.</title>
        <authorList>
            <person name="Cantin G.T."/>
            <person name="Yi W."/>
            <person name="Lu B."/>
            <person name="Park S.K."/>
            <person name="Xu T."/>
            <person name="Lee J.-D."/>
            <person name="Yates J.R. III"/>
        </authorList>
    </citation>
    <scope>PHOSPHORYLATION [LARGE SCALE ANALYSIS] AT THR-1167 AND SER-1176</scope>
    <scope>IDENTIFICATION BY MASS SPECTROMETRY [LARGE SCALE ANALYSIS]</scope>
    <source>
        <tissue>Cervix carcinoma</tissue>
    </source>
</reference>
<reference key="17">
    <citation type="journal article" date="2008" name="Proc. Natl. Acad. Sci. U.S.A.">
        <title>A quantitative atlas of mitotic phosphorylation.</title>
        <authorList>
            <person name="Dephoure N."/>
            <person name="Zhou C."/>
            <person name="Villen J."/>
            <person name="Beausoleil S.A."/>
            <person name="Bakalarski C.E."/>
            <person name="Elledge S.J."/>
            <person name="Gygi S.P."/>
        </authorList>
    </citation>
    <scope>PHOSPHORYLATION [LARGE SCALE ANALYSIS] AT SER-403 AND SER-1213</scope>
    <scope>PHOSPHORYLATION [LARGE SCALE ANALYSIS] AT SER-263 (ISOFORMS 11; 6 AND 9)</scope>
    <scope>PHOSPHORYLATION [LARGE SCALE ANALYSIS] AT SER-1109 AND SER-1115 (ISOFORM 13)</scope>
    <scope>PHOSPHORYLATION [LARGE SCALE ANALYSIS] AT SER-267 (ISOFORMS 13 AND 14)</scope>
    <scope>PHOSPHORYLATION [LARGE SCALE ANALYSIS] AT SER-258 (ISOFORM 2)</scope>
    <scope>PHOSPHORYLATION [LARGE SCALE ANALYSIS] AT SER-1010 AND SER-1016 (ISOFORM 3)</scope>
    <scope>PHOSPHORYLATION [LARGE SCALE ANALYSIS] AT SER-168 (ISOFORMS 3 AND 4)</scope>
    <scope>PHOSPHORYLATION [LARGE SCALE ANALYSIS] AT SER-774 AND SER-780 (ISOFORM 5)</scope>
    <scope>PHOSPHORYLATION [LARGE SCALE ANALYSIS] AT SER-1105 AND SER-1111 (ISOFORM 6)</scope>
    <scope>PHOSPHORYLATION [LARGE SCALE ANALYSIS] AT SER-1233 AND SER-1239 (ISOFORM 7)</scope>
    <scope>PHOSPHORYLATION [LARGE SCALE ANALYSIS] AT SER-1220 AND SER-1226 (ISOFORM 8)</scope>
    <scope>IDENTIFICATION BY MASS SPECTROMETRY [LARGE SCALE ANALYSIS]</scope>
    <source>
        <tissue>Cervix carcinoma</tissue>
    </source>
</reference>
<reference key="18">
    <citation type="journal article" date="2009" name="J. Exp. Biol.">
        <title>Modular structure of sodium-coupled bicarbonate transporters.</title>
        <authorList>
            <person name="Boron W.F."/>
            <person name="Chen L."/>
            <person name="Parker M.D."/>
        </authorList>
    </citation>
    <scope>REVIEW</scope>
    <scope>ALTERNATIVE SPLICING</scope>
</reference>
<reference key="19">
    <citation type="journal article" date="2009" name="Nat. Biotechnol.">
        <title>Mass-spectrometric identification and relative quantification of N-linked cell surface glycoproteins.</title>
        <authorList>
            <person name="Wollscheid B."/>
            <person name="Bausch-Fluck D."/>
            <person name="Henderson C."/>
            <person name="O'Brien R."/>
            <person name="Bibel M."/>
            <person name="Schiess R."/>
            <person name="Aebersold R."/>
            <person name="Watts J.D."/>
        </authorList>
    </citation>
    <scope>GLYCOSYLATION [LARGE SCALE ANALYSIS] AT ASN-776; ASN-786 AND ASN-791</scope>
    <source>
        <tissue>Leukemic T-cell</tissue>
    </source>
</reference>
<reference key="20">
    <citation type="journal article" date="2009" name="Sci. Signal.">
        <title>Quantitative phosphoproteomic analysis of T cell receptor signaling reveals system-wide modulation of protein-protein interactions.</title>
        <authorList>
            <person name="Mayya V."/>
            <person name="Lundgren D.H."/>
            <person name="Hwang S.-I."/>
            <person name="Rezaul K."/>
            <person name="Wu L."/>
            <person name="Eng J.K."/>
            <person name="Rodionov V."/>
            <person name="Han D.K."/>
        </authorList>
    </citation>
    <scope>PHOSPHORYLATION [LARGE SCALE ANALYSIS] AT THR-1167 AND SER-1176</scope>
    <scope>PHOSPHORYLATION [LARGE SCALE ANALYSIS] AT SER-263 (ISOFORMS 11; 6 AND 9)</scope>
    <scope>PHOSPHORYLATION [LARGE SCALE ANALYSIS] AT SER-1077 (ISOFORM 13)</scope>
    <scope>PHOSPHORYLATION [LARGE SCALE ANALYSIS] AT SER-267 (ISOFORMS 13 AND 14)</scope>
    <scope>PHOSPHORYLATION [LARGE SCALE ANALYSIS] AT SER-258 (ISOFORM 2)</scope>
    <scope>PHOSPHORYLATION [LARGE SCALE ANALYSIS] AT SER-168 (ISOFORMS 3 AND 4)</scope>
    <scope>PHOSPHORYLATION [LARGE SCALE ANALYSIS] AT SER-742 (ISOFORM 5)</scope>
    <scope>PHOSPHORYLATION [LARGE SCALE ANALYSIS] AT SER-1073 (ISOFORM 6)</scope>
    <scope>PHOSPHORYLATION [LARGE SCALE ANALYSIS] AT SER-1201 (ISOFORM 7)</scope>
    <scope>PHOSPHORYLATION [LARGE SCALE ANALYSIS] AT SER-1188 (ISOFORM 8)</scope>
    <scope>IDENTIFICATION BY MASS SPECTROMETRY [LARGE SCALE ANALYSIS]</scope>
    <source>
        <tissue>Leukemic T-cell</tissue>
    </source>
</reference>
<reference key="21">
    <citation type="journal article" date="2010" name="Sci. Signal.">
        <title>Quantitative phosphoproteomics reveals widespread full phosphorylation site occupancy during mitosis.</title>
        <authorList>
            <person name="Olsen J.V."/>
            <person name="Vermeulen M."/>
            <person name="Santamaria A."/>
            <person name="Kumar C."/>
            <person name="Miller M.L."/>
            <person name="Jensen L.J."/>
            <person name="Gnad F."/>
            <person name="Cox J."/>
            <person name="Jensen T.S."/>
            <person name="Nigg E.A."/>
            <person name="Brunak S."/>
            <person name="Mann M."/>
        </authorList>
    </citation>
    <scope>PHOSPHORYLATION [LARGE SCALE ANALYSIS] AT SER-1176</scope>
    <scope>PHOSPHORYLATION [LARGE SCALE ANALYSIS] AT SER-260 AND SER-263 (ISOFORMS 11; 6 AND 9)</scope>
    <scope>PHOSPHORYLATION [LARGE SCALE ANALYSIS] AT SER-1106 AND SER-1109 (ISOFORM 13)</scope>
    <scope>PHOSPHORYLATION [LARGE SCALE ANALYSIS] AT SER-264 AND SER-267 (ISOFORMS 13 AND 14)</scope>
    <scope>PHOSPHORYLATION [LARGE SCALE ANALYSIS] AT SER-255 AND SER-258 (ISOFORM 2)</scope>
    <scope>PHOSPHORYLATION [LARGE SCALE ANALYSIS] AT SER-1007 AND SER-1010 (ISOFORM 3)</scope>
    <scope>PHOSPHORYLATION [LARGE SCALE ANALYSIS] AT SER-165 AND SER-168 (ISOFORMS 3 AND 4)</scope>
    <scope>PHOSPHORYLATION [LARGE SCALE ANALYSIS] AT SER-771 AND SER-774 (ISOFORM 5)</scope>
    <scope>PHOSPHORYLATION [LARGE SCALE ANALYSIS] AT SER-1102 AND SER-1105 (ISOFORM 6)</scope>
    <scope>PHOSPHORYLATION [LARGE SCALE ANALYSIS] AT SER-1230 AND SER-1233 (ISOFORM 7)</scope>
    <scope>PHOSPHORYLATION [LARGE SCALE ANALYSIS] AT SER-1217 AND SER-1220 (ISOFORM 8)</scope>
    <scope>IDENTIFICATION BY MASS SPECTROMETRY [LARGE SCALE ANALYSIS]</scope>
    <source>
        <tissue>Cervix carcinoma</tissue>
    </source>
</reference>
<reference key="22">
    <citation type="journal article" date="2011" name="Sci. Signal.">
        <title>System-wide temporal characterization of the proteome and phosphoproteome of human embryonic stem cell differentiation.</title>
        <authorList>
            <person name="Rigbolt K.T."/>
            <person name="Prokhorova T.A."/>
            <person name="Akimov V."/>
            <person name="Henningsen J."/>
            <person name="Johansen P.T."/>
            <person name="Kratchmarova I."/>
            <person name="Kassem M."/>
            <person name="Mann M."/>
            <person name="Olsen J.V."/>
            <person name="Blagoev B."/>
        </authorList>
    </citation>
    <scope>PHOSPHORYLATION [LARGE SCALE ANALYSIS] AT SER-242 AND SER-403</scope>
    <scope>PHOSPHORYLATION [LARGE SCALE ANALYSIS] AT SER-263 (ISOFORMS 11; 6 AND 9)</scope>
    <scope>PHOSPHORYLATION [LARGE SCALE ANALYSIS] AT SER-1106 (ISOFORM 13)</scope>
    <scope>PHOSPHORYLATION [LARGE SCALE ANALYSIS] AT SER-267 (ISOFORMS 13 AND 14)</scope>
    <scope>PHOSPHORYLATION [LARGE SCALE ANALYSIS] AT SER-258 (ISOFORM 2)</scope>
    <scope>PHOSPHORYLATION [LARGE SCALE ANALYSIS] AT SER-1007 (ISOFORM 3)</scope>
    <scope>PHOSPHORYLATION [LARGE SCALE ANALYSIS] AT SER-168 (ISOFORMS 3 AND 4)</scope>
    <scope>PHOSPHORYLATION [LARGE SCALE ANALYSIS] AT SER-771 (ISOFORM 5)</scope>
    <scope>PHOSPHORYLATION [LARGE SCALE ANALYSIS] AT SER-1102 (ISOFORM 6)</scope>
    <scope>PHOSPHORYLATION [LARGE SCALE ANALYSIS] AT SER-1230 (ISOFORM 7)</scope>
    <scope>PHOSPHORYLATION [LARGE SCALE ANALYSIS] AT SER-1217 (ISOFORM 8)</scope>
    <scope>IDENTIFICATION BY MASS SPECTROMETRY [LARGE SCALE ANALYSIS]</scope>
</reference>
<reference key="23">
    <citation type="journal article" date="2013" name="J. Proteome Res.">
        <title>Toward a comprehensive characterization of a human cancer cell phosphoproteome.</title>
        <authorList>
            <person name="Zhou H."/>
            <person name="Di Palma S."/>
            <person name="Preisinger C."/>
            <person name="Peng M."/>
            <person name="Polat A.N."/>
            <person name="Heck A.J."/>
            <person name="Mohammed S."/>
        </authorList>
    </citation>
    <scope>PHOSPHORYLATION [LARGE SCALE ANALYSIS] AT SER-55; SER-242; SER-403; SER-407; SER-556 AND THR-557</scope>
    <scope>IDENTIFICATION BY MASS SPECTROMETRY [LARGE SCALE ANALYSIS]</scope>
    <source>
        <tissue>Cervix carcinoma</tissue>
        <tissue>Erythroleukemia</tissue>
    </source>
</reference>
<reference key="24">
    <citation type="journal article" date="2015" name="Proteomics">
        <title>N-terminome analysis of the human mitochondrial proteome.</title>
        <authorList>
            <person name="Vaca Jacome A.S."/>
            <person name="Rabilloud T."/>
            <person name="Schaeffer-Reiss C."/>
            <person name="Rompais M."/>
            <person name="Ayoub D."/>
            <person name="Lane L."/>
            <person name="Bairoch A."/>
            <person name="Van Dorsselaer A."/>
            <person name="Carapito C."/>
        </authorList>
    </citation>
    <scope>IDENTIFICATION BY MASS SPECTROMETRY [LARGE SCALE ANALYSIS]</scope>
</reference>
<reference key="25">
    <citation type="journal article" date="2018" name="Cell Host Microbe">
        <title>The Bicarbonate Transporter SLC4A7 Plays a Key Role in Macrophage Phagosome Acidification.</title>
        <authorList>
            <person name="Sedlyarov V."/>
            <person name="Eichner R."/>
            <person name="Girardi E."/>
            <person name="Essletzbichler P."/>
            <person name="Goldmann U."/>
            <person name="Nunes-Hasler P."/>
            <person name="Srndic I."/>
            <person name="Moskovskich A."/>
            <person name="Heinz L.X."/>
            <person name="Kartnig F."/>
            <person name="Bigenzahn J.W."/>
            <person name="Rebsamen M."/>
            <person name="Kovarik P."/>
            <person name="Demaurex N."/>
            <person name="Superti-Furga G."/>
        </authorList>
    </citation>
    <scope>FUNCTION</scope>
    <scope>TRANSPORTER ACTIVITY</scope>
    <scope>INDUCTION</scope>
    <scope>MUTAGENESIS OF THR-549; ASP-811 AND 1008-THR--LEU-1131 (ISOFORM 6)</scope>
    <scope>SUBCELLULAR LOCATION</scope>
    <scope>REGION (ISOFORM 6)</scope>
</reference>
<reference key="26">
    <citation type="journal article" date="2022" name="Mol. Cell">
        <title>The mTORC1-SLC4A7 axis stimulates bicarbonate import to enhance de novo nucleotide synthesis.</title>
        <authorList>
            <person name="Ali E.S."/>
            <person name="Liponska A."/>
            <person name="O'Hara B.P."/>
            <person name="Amici D.R."/>
            <person name="Torno M.D."/>
            <person name="Gao P."/>
            <person name="Asara J.M."/>
            <person name="Yap M.F."/>
            <person name="Mendillo M.L."/>
            <person name="Ben-Sahra I."/>
        </authorList>
    </citation>
    <scope>FUNCTION</scope>
    <scope>TRANSPORTER ACTIVITY</scope>
    <scope>INDUCTION</scope>
</reference>
<proteinExistence type="evidence at protein level"/>
<sequence>MERFRLEKKLPGPDEEAVVDLGKTSSTVNTKFEKEELESHRAVYIGVHVPFSKESRRRHRHRGHKHHHRRRKDKESDKEDGRESPSYDTPSQRVQFILGTEDDDEEHIPHDLFTEMDELCYRDGEEYEWKETARWLKFEEDVEDGGDRWSKPYVATLSLHSLFELRSCILNGTVMLDMRASTLDEIADMVLDNMIASGQLDESIRENVREALLKRHHHQNEKRFTSRIPLVRSFADIGKKHSDPHLLERNGEGLSASRHSLRTGLSASNLSLRGESPLSLLLGHLLPSSRAGTPAGSRCTTPVPTPQNSPPSSPSISRLTSRSSQESQRQAPELLVSPASDDIPTVVIHPPEEDLEAALKGEEQKNEENVDLTPGILASPQSAPGNLDNSKSGEIKGNGSGGSRENSTVDFSKVDMNFMRKIPTGAEASNVLVGEVDFLERPIIAFVRLAPAVLLTGLTEVPVPTRFLFLLLGPAGKAPQYHEIGRSIATLMTDEIFHDVAYKAKDRNDLLSGIDEFLDQVTVLPPGEWDPSIRIEPPKSVPSQEKRKIPVFHNGSTPTLGETPKEAAHHAGPELQRTGRLFGGLILDIKRKAPFFLSDFKDALSLQCLASILFLYCACMSPVITFGGLLGEATEGRISAIESLFGASLTGIAYSLFAGQPLTILGSTGPVLVFEKILYKFCRDYQLSYLSLRTSIGLWTSFLCIVLVATDASSLVCYITRFTEEAFAALICIIFIYEALEKLFDLGETYAFNMHNNLDKLTSYSCVCTEPPNPSNETLAQWKKDNITAHNISWRNLTVSECKKLRGVFLGSACGHHGPYIPDVLFWCVILFFTTFFLSSFLKQFKTKRYFPTKVRSTISDFAVFLTIVIMVTIDYLVGVPSPKLHVPEKFEPTHPERGWIISPLGDNPWWTLLIAAIPALLCTILIFMDQQITAVIINRKEHKLKKGAGYHLDLLMVGVMLGVCSVMGLPWFVAATVLSISHVNSLKVESECSAPGEQPKFLGIREQRVTGLMIFILMGLSVFMTSVLKFIPMPVLYGVFLYMGVSSLKGIQLFDRIKLFGMPAKHQPDLIYLRYVPLWKVHIFTVIQLTCLVLLWVIKVSAAAVVFPMMVLALVFVRKLMDLCFTKRELSWLDDLMPESKKKKEDDKKKKEKEEAERMLQDDDDTVHLPFEGGSLLQIPVKALKYSPDKPVSVKISFEDEPRKKYVDAETSL</sequence>